<protein>
    <recommendedName>
        <fullName>Fibulin-7</fullName>
        <shortName>FIBL-7</shortName>
    </recommendedName>
</protein>
<sequence>MVPSSPRALFLLLLILACPEPRASQNCLSKQQLLSAIRQLQQLLKGQETRFAEGIRHMKSRLAALQNSVGRVGPDALPVSCPALNTPADGRKFGSKYLVDHEVHFTCNPGFRLVGPSSVVCLPNGTWTGEQPHCRGISECSSQPCQNGGTCVEGVNQYRCICPPGRTGNRCQHQAQTAAPEGSVAGDSAFSRAPRCAQVERAQHCSCEAGFHLSGAAGDSVCQDVNECELYGQEGRPRLCMHACVNTPGSYRCTCPGGYRTLADGKSCEDVDECVGLQPVCPQGTTCINTGGSFQCVSPECPEGSGNVSYVKTSPFQCERNPCPMDSRPCRHLPKTISFHYLSLPSNLKTPITLFRMATASAPGRAGPNSLRFGIVGGNSRGHFVMQRSDRQTGDLILVQNLEGPQTLEVDVDMSEYLDRSFQANHVSKVTIFVSPYDF</sequence>
<comment type="function">
    <text evidence="1">An adhesion molecule that interacts with extracellular matrix molecules in developing teeth and may play important roles in differentiation and maintenance of odontoblasts as well as in dentin formation.</text>
</comment>
<comment type="subunit">
    <text evidence="1">Interacts with heparin, FBLN1, FN1 and DSPP. Preferentially binds dental mesenchyme cells and odontoblasts but not dental epithelial cells or nondental cells. Binding requires a heparan sulfate-containing receptor on the cell surface as well as an integrin (By similarity).</text>
</comment>
<comment type="subcellular location">
    <subcellularLocation>
        <location evidence="1">Secreted</location>
        <location evidence="1">Extracellular space</location>
        <location evidence="1">Extracellular matrix</location>
    </subcellularLocation>
</comment>
<comment type="alternative products">
    <event type="alternative splicing"/>
    <isoform>
        <id>Q53RD9-1</id>
        <name>1</name>
        <sequence type="displayed"/>
    </isoform>
    <isoform>
        <id>Q53RD9-2</id>
        <name>2</name>
        <sequence type="described" ref="VSP_030086"/>
    </isoform>
    <isoform>
        <id>Q53RD9-3</id>
        <name>3</name>
        <sequence type="described" ref="VSP_030084"/>
    </isoform>
    <isoform>
        <id>Q53RD9-4</id>
        <name>4</name>
        <sequence type="described" ref="VSP_030085"/>
    </isoform>
</comment>
<comment type="PTM">
    <text evidence="1">N-glycosylated.</text>
</comment>
<comment type="similarity">
    <text evidence="8">Belongs to the fibulin family.</text>
</comment>
<dbReference type="EMBL" id="AK094759">
    <property type="protein sequence ID" value="BAC04416.1"/>
    <property type="molecule type" value="mRNA"/>
</dbReference>
<dbReference type="EMBL" id="AC092645">
    <property type="protein sequence ID" value="AAY14854.1"/>
    <property type="molecule type" value="Genomic_DNA"/>
</dbReference>
<dbReference type="EMBL" id="CH471245">
    <property type="protein sequence ID" value="EAW52100.1"/>
    <property type="molecule type" value="Genomic_DNA"/>
</dbReference>
<dbReference type="EMBL" id="BC035784">
    <property type="protein sequence ID" value="AAH35784.1"/>
    <property type="molecule type" value="mRNA"/>
</dbReference>
<dbReference type="EMBL" id="BC126986">
    <property type="protein sequence ID" value="AAI26987.1"/>
    <property type="molecule type" value="mRNA"/>
</dbReference>
<dbReference type="EMBL" id="BC126987">
    <property type="protein sequence ID" value="AAI26988.1"/>
    <property type="molecule type" value="mRNA"/>
</dbReference>
<dbReference type="EMBL" id="CR933697">
    <property type="protein sequence ID" value="CAI46168.1"/>
    <property type="molecule type" value="mRNA"/>
</dbReference>
<dbReference type="CCDS" id="CCDS2095.1">
    <molecule id="Q53RD9-1"/>
</dbReference>
<dbReference type="CCDS" id="CCDS46391.1">
    <molecule id="Q53RD9-2"/>
</dbReference>
<dbReference type="RefSeq" id="NP_001121637.1">
    <molecule id="Q53RD9-2"/>
    <property type="nucleotide sequence ID" value="NM_001128165.2"/>
</dbReference>
<dbReference type="RefSeq" id="NP_694946.2">
    <molecule id="Q53RD9-1"/>
    <property type="nucleotide sequence ID" value="NM_153214.3"/>
</dbReference>
<dbReference type="BioGRID" id="126208">
    <property type="interactions" value="20"/>
</dbReference>
<dbReference type="FunCoup" id="Q53RD9">
    <property type="interactions" value="25"/>
</dbReference>
<dbReference type="IntAct" id="Q53RD9">
    <property type="interactions" value="16"/>
</dbReference>
<dbReference type="STRING" id="9606.ENSP00000331411"/>
<dbReference type="GlyConnect" id="1246">
    <property type="glycosylation" value="1 N-Linked glycan (1 site)"/>
</dbReference>
<dbReference type="GlyCosmos" id="Q53RD9">
    <property type="glycosylation" value="3 sites, 2 glycans"/>
</dbReference>
<dbReference type="GlyGen" id="Q53RD9">
    <property type="glycosylation" value="4 sites, 9 N-linked glycans (1 site), 2 O-linked glycans (2 sites)"/>
</dbReference>
<dbReference type="iPTMnet" id="Q53RD9"/>
<dbReference type="PhosphoSitePlus" id="Q53RD9"/>
<dbReference type="BioMuta" id="FBLN7"/>
<dbReference type="DMDM" id="74726569"/>
<dbReference type="jPOST" id="Q53RD9"/>
<dbReference type="MassIVE" id="Q53RD9"/>
<dbReference type="PaxDb" id="9606-ENSP00000331411"/>
<dbReference type="PeptideAtlas" id="Q53RD9"/>
<dbReference type="ProteomicsDB" id="62519">
    <molecule id="Q53RD9-1"/>
</dbReference>
<dbReference type="ProteomicsDB" id="62520">
    <molecule id="Q53RD9-2"/>
</dbReference>
<dbReference type="ProteomicsDB" id="62521">
    <molecule id="Q53RD9-3"/>
</dbReference>
<dbReference type="ProteomicsDB" id="62522">
    <molecule id="Q53RD9-4"/>
</dbReference>
<dbReference type="Antibodypedia" id="33261">
    <property type="antibodies" value="132 antibodies from 20 providers"/>
</dbReference>
<dbReference type="DNASU" id="129804"/>
<dbReference type="Ensembl" id="ENST00000331203.7">
    <molecule id="Q53RD9-1"/>
    <property type="protein sequence ID" value="ENSP00000331411.2"/>
    <property type="gene ID" value="ENSG00000144152.13"/>
</dbReference>
<dbReference type="Ensembl" id="ENST00000409450.7">
    <molecule id="Q53RD9-2"/>
    <property type="protein sequence ID" value="ENSP00000387000.3"/>
    <property type="gene ID" value="ENSG00000144152.13"/>
</dbReference>
<dbReference type="Ensembl" id="ENST00000409667.7">
    <molecule id="Q53RD9-4"/>
    <property type="protein sequence ID" value="ENSP00000386822.3"/>
    <property type="gene ID" value="ENSG00000144152.13"/>
</dbReference>
<dbReference type="GeneID" id="129804"/>
<dbReference type="KEGG" id="hsa:129804"/>
<dbReference type="MANE-Select" id="ENST00000331203.7">
    <property type="protein sequence ID" value="ENSP00000331411.2"/>
    <property type="RefSeq nucleotide sequence ID" value="NM_153214.3"/>
    <property type="RefSeq protein sequence ID" value="NP_694946.2"/>
</dbReference>
<dbReference type="UCSC" id="uc002tho.2">
    <molecule id="Q53RD9-1"/>
    <property type="organism name" value="human"/>
</dbReference>
<dbReference type="AGR" id="HGNC:26740"/>
<dbReference type="CTD" id="129804"/>
<dbReference type="DisGeNET" id="129804"/>
<dbReference type="GeneCards" id="FBLN7"/>
<dbReference type="HGNC" id="HGNC:26740">
    <property type="gene designation" value="FBLN7"/>
</dbReference>
<dbReference type="HPA" id="ENSG00000144152">
    <property type="expression patterns" value="Low tissue specificity"/>
</dbReference>
<dbReference type="MIM" id="611551">
    <property type="type" value="gene"/>
</dbReference>
<dbReference type="neXtProt" id="NX_Q53RD9"/>
<dbReference type="OpenTargets" id="ENSG00000144152"/>
<dbReference type="Orphanet" id="684742">
    <property type="disease" value="2q13 microdeletion syndrome"/>
</dbReference>
<dbReference type="PharmGKB" id="PA162388107"/>
<dbReference type="VEuPathDB" id="HostDB:ENSG00000144152"/>
<dbReference type="eggNOG" id="KOG1217">
    <property type="taxonomic scope" value="Eukaryota"/>
</dbReference>
<dbReference type="GeneTree" id="ENSGT00830000128368"/>
<dbReference type="HOGENOM" id="CLU_043541_0_0_1"/>
<dbReference type="InParanoid" id="Q53RD9"/>
<dbReference type="OMA" id="CEPGFHM"/>
<dbReference type="OrthoDB" id="4062651at2759"/>
<dbReference type="PAN-GO" id="Q53RD9">
    <property type="GO annotations" value="0 GO annotations based on evolutionary models"/>
</dbReference>
<dbReference type="PhylomeDB" id="Q53RD9"/>
<dbReference type="TreeFam" id="TF330076"/>
<dbReference type="PathwayCommons" id="Q53RD9"/>
<dbReference type="SignaLink" id="Q53RD9"/>
<dbReference type="BioGRID-ORCS" id="129804">
    <property type="hits" value="15 hits in 1147 CRISPR screens"/>
</dbReference>
<dbReference type="ChiTaRS" id="FBLN7">
    <property type="organism name" value="human"/>
</dbReference>
<dbReference type="GenomeRNAi" id="129804"/>
<dbReference type="Pharos" id="Q53RD9">
    <property type="development level" value="Tbio"/>
</dbReference>
<dbReference type="PRO" id="PR:Q53RD9"/>
<dbReference type="Proteomes" id="UP000005640">
    <property type="component" value="Chromosome 2"/>
</dbReference>
<dbReference type="RNAct" id="Q53RD9">
    <property type="molecule type" value="protein"/>
</dbReference>
<dbReference type="Bgee" id="ENSG00000144152">
    <property type="expression patterns" value="Expressed in secondary oocyte and 123 other cell types or tissues"/>
</dbReference>
<dbReference type="ExpressionAtlas" id="Q53RD9">
    <property type="expression patterns" value="baseline and differential"/>
</dbReference>
<dbReference type="GO" id="GO:0031012">
    <property type="term" value="C:extracellular matrix"/>
    <property type="evidence" value="ECO:0007669"/>
    <property type="project" value="Ensembl"/>
</dbReference>
<dbReference type="GO" id="GO:0005615">
    <property type="term" value="C:extracellular space"/>
    <property type="evidence" value="ECO:0007669"/>
    <property type="project" value="Ensembl"/>
</dbReference>
<dbReference type="GO" id="GO:0005925">
    <property type="term" value="C:focal adhesion"/>
    <property type="evidence" value="ECO:0007005"/>
    <property type="project" value="UniProtKB"/>
</dbReference>
<dbReference type="GO" id="GO:0005509">
    <property type="term" value="F:calcium ion binding"/>
    <property type="evidence" value="ECO:0007669"/>
    <property type="project" value="InterPro"/>
</dbReference>
<dbReference type="GO" id="GO:0043395">
    <property type="term" value="F:heparan sulfate proteoglycan binding"/>
    <property type="evidence" value="ECO:0007669"/>
    <property type="project" value="Ensembl"/>
</dbReference>
<dbReference type="GO" id="GO:0008201">
    <property type="term" value="F:heparin binding"/>
    <property type="evidence" value="ECO:0007669"/>
    <property type="project" value="UniProtKB-KW"/>
</dbReference>
<dbReference type="GO" id="GO:0007155">
    <property type="term" value="P:cell adhesion"/>
    <property type="evidence" value="ECO:0007669"/>
    <property type="project" value="UniProtKB-KW"/>
</dbReference>
<dbReference type="CDD" id="cd00033">
    <property type="entry name" value="CCP"/>
    <property type="match status" value="1"/>
</dbReference>
<dbReference type="CDD" id="cd00054">
    <property type="entry name" value="EGF_CA"/>
    <property type="match status" value="3"/>
</dbReference>
<dbReference type="FunFam" id="2.10.25.10:FF:000568">
    <property type="entry name" value="Fibulin 7"/>
    <property type="match status" value="1"/>
</dbReference>
<dbReference type="FunFam" id="2.10.25.10:FF:000819">
    <property type="entry name" value="Fibulin 7"/>
    <property type="match status" value="1"/>
</dbReference>
<dbReference type="FunFam" id="2.10.70.10:FF:000064">
    <property type="entry name" value="Fibulin 7"/>
    <property type="match status" value="1"/>
</dbReference>
<dbReference type="FunFam" id="2.10.25.10:FF:000008">
    <property type="entry name" value="Signal peptide, CUB domain, EGF-like 2"/>
    <property type="match status" value="1"/>
</dbReference>
<dbReference type="Gene3D" id="2.10.70.10">
    <property type="entry name" value="Complement Module, domain 1"/>
    <property type="match status" value="1"/>
</dbReference>
<dbReference type="Gene3D" id="2.10.25.10">
    <property type="entry name" value="Laminin"/>
    <property type="match status" value="3"/>
</dbReference>
<dbReference type="InterPro" id="IPR050751">
    <property type="entry name" value="ECM_structural_protein"/>
</dbReference>
<dbReference type="InterPro" id="IPR001881">
    <property type="entry name" value="EGF-like_Ca-bd_dom"/>
</dbReference>
<dbReference type="InterPro" id="IPR000742">
    <property type="entry name" value="EGF-like_dom"/>
</dbReference>
<dbReference type="InterPro" id="IPR000152">
    <property type="entry name" value="EGF-type_Asp/Asn_hydroxyl_site"/>
</dbReference>
<dbReference type="InterPro" id="IPR018097">
    <property type="entry name" value="EGF_Ca-bd_CS"/>
</dbReference>
<dbReference type="InterPro" id="IPR055088">
    <property type="entry name" value="Fibulin_C"/>
</dbReference>
<dbReference type="InterPro" id="IPR049883">
    <property type="entry name" value="NOTCH1_EGF-like"/>
</dbReference>
<dbReference type="InterPro" id="IPR035976">
    <property type="entry name" value="Sushi/SCR/CCP_sf"/>
</dbReference>
<dbReference type="InterPro" id="IPR000436">
    <property type="entry name" value="Sushi_SCR_CCP_dom"/>
</dbReference>
<dbReference type="PANTHER" id="PTHR24034">
    <property type="entry name" value="EGF-LIKE DOMAIN-CONTAINING PROTEIN"/>
    <property type="match status" value="1"/>
</dbReference>
<dbReference type="PANTHER" id="PTHR24034:SF94">
    <property type="entry name" value="FIBULIN-7"/>
    <property type="match status" value="1"/>
</dbReference>
<dbReference type="Pfam" id="PF00008">
    <property type="entry name" value="EGF"/>
    <property type="match status" value="1"/>
</dbReference>
<dbReference type="Pfam" id="PF07645">
    <property type="entry name" value="EGF_CA"/>
    <property type="match status" value="1"/>
</dbReference>
<dbReference type="Pfam" id="PF22914">
    <property type="entry name" value="Fibulin_C"/>
    <property type="match status" value="1"/>
</dbReference>
<dbReference type="Pfam" id="PF14670">
    <property type="entry name" value="FXa_inhibition"/>
    <property type="match status" value="1"/>
</dbReference>
<dbReference type="Pfam" id="PF00084">
    <property type="entry name" value="Sushi"/>
    <property type="match status" value="1"/>
</dbReference>
<dbReference type="PRINTS" id="PR00010">
    <property type="entry name" value="EGFBLOOD"/>
</dbReference>
<dbReference type="SMART" id="SM00032">
    <property type="entry name" value="CCP"/>
    <property type="match status" value="1"/>
</dbReference>
<dbReference type="SMART" id="SM00181">
    <property type="entry name" value="EGF"/>
    <property type="match status" value="3"/>
</dbReference>
<dbReference type="SMART" id="SM00179">
    <property type="entry name" value="EGF_CA"/>
    <property type="match status" value="3"/>
</dbReference>
<dbReference type="SUPFAM" id="SSF57535">
    <property type="entry name" value="Complement control module/SCR domain"/>
    <property type="match status" value="1"/>
</dbReference>
<dbReference type="SUPFAM" id="SSF57196">
    <property type="entry name" value="EGF/Laminin"/>
    <property type="match status" value="2"/>
</dbReference>
<dbReference type="PROSITE" id="PS00010">
    <property type="entry name" value="ASX_HYDROXYL"/>
    <property type="match status" value="1"/>
</dbReference>
<dbReference type="PROSITE" id="PS00022">
    <property type="entry name" value="EGF_1"/>
    <property type="match status" value="1"/>
</dbReference>
<dbReference type="PROSITE" id="PS01186">
    <property type="entry name" value="EGF_2"/>
    <property type="match status" value="1"/>
</dbReference>
<dbReference type="PROSITE" id="PS50026">
    <property type="entry name" value="EGF_3"/>
    <property type="match status" value="2"/>
</dbReference>
<dbReference type="PROSITE" id="PS01187">
    <property type="entry name" value="EGF_CA"/>
    <property type="match status" value="2"/>
</dbReference>
<dbReference type="PROSITE" id="PS50923">
    <property type="entry name" value="SUSHI"/>
    <property type="match status" value="1"/>
</dbReference>
<accession>Q53RD9</accession>
<accession>A0JNV1</accession>
<accession>A0JNV2</accession>
<accession>Q5H9P5</accession>
<accession>Q8N9G0</accession>
<organism>
    <name type="scientific">Homo sapiens</name>
    <name type="common">Human</name>
    <dbReference type="NCBI Taxonomy" id="9606"/>
    <lineage>
        <taxon>Eukaryota</taxon>
        <taxon>Metazoa</taxon>
        <taxon>Chordata</taxon>
        <taxon>Craniata</taxon>
        <taxon>Vertebrata</taxon>
        <taxon>Euteleostomi</taxon>
        <taxon>Mammalia</taxon>
        <taxon>Eutheria</taxon>
        <taxon>Euarchontoglires</taxon>
        <taxon>Primates</taxon>
        <taxon>Haplorrhini</taxon>
        <taxon>Catarrhini</taxon>
        <taxon>Hominidae</taxon>
        <taxon>Homo</taxon>
    </lineage>
</organism>
<evidence type="ECO:0000250" key="1"/>
<evidence type="ECO:0000255" key="2"/>
<evidence type="ECO:0000255" key="3">
    <source>
        <dbReference type="PROSITE-ProRule" id="PRU00076"/>
    </source>
</evidence>
<evidence type="ECO:0000255" key="4">
    <source>
        <dbReference type="PROSITE-ProRule" id="PRU00302"/>
    </source>
</evidence>
<evidence type="ECO:0000269" key="5">
    <source>
    </source>
</evidence>
<evidence type="ECO:0000303" key="6">
    <source>
    </source>
</evidence>
<evidence type="ECO:0000303" key="7">
    <source>
    </source>
</evidence>
<evidence type="ECO:0000305" key="8"/>
<keyword id="KW-0025">Alternative splicing</keyword>
<keyword id="KW-0106">Calcium</keyword>
<keyword id="KW-0130">Cell adhesion</keyword>
<keyword id="KW-0175">Coiled coil</keyword>
<keyword id="KW-1015">Disulfide bond</keyword>
<keyword id="KW-0245">EGF-like domain</keyword>
<keyword id="KW-0272">Extracellular matrix</keyword>
<keyword id="KW-0325">Glycoprotein</keyword>
<keyword id="KW-0358">Heparin-binding</keyword>
<keyword id="KW-1267">Proteomics identification</keyword>
<keyword id="KW-1185">Reference proteome</keyword>
<keyword id="KW-0677">Repeat</keyword>
<keyword id="KW-0964">Secreted</keyword>
<keyword id="KW-0732">Signal</keyword>
<keyword id="KW-0768">Sushi</keyword>
<gene>
    <name type="primary">FBLN7</name>
    <name type="synonym">TM14</name>
</gene>
<feature type="signal peptide" evidence="2">
    <location>
        <begin position="1"/>
        <end position="24"/>
    </location>
</feature>
<feature type="chain" id="PRO_0000313655" description="Fibulin-7">
    <location>
        <begin position="25"/>
        <end position="439"/>
    </location>
</feature>
<feature type="domain" description="Sushi" evidence="4">
    <location>
        <begin position="79"/>
        <end position="136"/>
    </location>
</feature>
<feature type="domain" description="EGF-like 1; calcium-binding" evidence="3">
    <location>
        <begin position="136"/>
        <end position="172"/>
    </location>
</feature>
<feature type="domain" description="EGF-like 2; calcium-binding" evidence="3">
    <location>
        <begin position="224"/>
        <end position="269"/>
    </location>
</feature>
<feature type="domain" description="EGF-like 3; calcium-binding" evidence="3">
    <location>
        <begin position="270"/>
        <end position="319"/>
    </location>
</feature>
<feature type="coiled-coil region" evidence="2">
    <location>
        <begin position="28"/>
        <end position="53"/>
    </location>
</feature>
<feature type="glycosylation site" description="N-linked (GlcNAc...) asparagine" evidence="2">
    <location>
        <position position="124"/>
    </location>
</feature>
<feature type="glycosylation site" description="N-linked (GlcNAc...) asparagine" evidence="2">
    <location>
        <position position="307"/>
    </location>
</feature>
<feature type="disulfide bond" evidence="1">
    <location>
        <begin position="81"/>
        <end position="121"/>
    </location>
</feature>
<feature type="disulfide bond" evidence="1">
    <location>
        <begin position="107"/>
        <end position="134"/>
    </location>
</feature>
<feature type="disulfide bond" evidence="1">
    <location>
        <begin position="140"/>
        <end position="151"/>
    </location>
</feature>
<feature type="disulfide bond" evidence="1">
    <location>
        <begin position="145"/>
        <end position="160"/>
    </location>
</feature>
<feature type="disulfide bond" evidence="1">
    <location>
        <begin position="162"/>
        <end position="171"/>
    </location>
</feature>
<feature type="disulfide bond" evidence="1">
    <location>
        <begin position="228"/>
        <end position="244"/>
    </location>
</feature>
<feature type="disulfide bond" evidence="1">
    <location>
        <begin position="240"/>
        <end position="253"/>
    </location>
</feature>
<feature type="disulfide bond" evidence="1">
    <location>
        <begin position="255"/>
        <end position="268"/>
    </location>
</feature>
<feature type="disulfide bond" evidence="1">
    <location>
        <begin position="274"/>
        <end position="287"/>
    </location>
</feature>
<feature type="disulfide bond" evidence="1">
    <location>
        <begin position="281"/>
        <end position="296"/>
    </location>
</feature>
<feature type="disulfide bond" evidence="1">
    <location>
        <begin position="301"/>
        <end position="318"/>
    </location>
</feature>
<feature type="splice variant" id="VSP_030084" description="In isoform 3." evidence="7">
    <location>
        <begin position="1"/>
        <end position="57"/>
    </location>
</feature>
<feature type="splice variant" id="VSP_030085" description="In isoform 4." evidence="6">
    <location>
        <begin position="136"/>
        <end position="269"/>
    </location>
</feature>
<feature type="splice variant" id="VSP_030086" description="In isoform 2." evidence="6">
    <location>
        <begin position="178"/>
        <end position="223"/>
    </location>
</feature>
<feature type="sequence variant" id="VAR_037689" description="In dbSNP:rs35586251." evidence="5">
    <original>V</original>
    <variation>M</variation>
    <location>
        <position position="119"/>
    </location>
</feature>
<proteinExistence type="evidence at protein level"/>
<name>FBLN7_HUMAN</name>
<reference key="1">
    <citation type="journal article" date="2004" name="Nat. Genet.">
        <title>Complete sequencing and characterization of 21,243 full-length human cDNAs.</title>
        <authorList>
            <person name="Ota T."/>
            <person name="Suzuki Y."/>
            <person name="Nishikawa T."/>
            <person name="Otsuki T."/>
            <person name="Sugiyama T."/>
            <person name="Irie R."/>
            <person name="Wakamatsu A."/>
            <person name="Hayashi K."/>
            <person name="Sato H."/>
            <person name="Nagai K."/>
            <person name="Kimura K."/>
            <person name="Makita H."/>
            <person name="Sekine M."/>
            <person name="Obayashi M."/>
            <person name="Nishi T."/>
            <person name="Shibahara T."/>
            <person name="Tanaka T."/>
            <person name="Ishii S."/>
            <person name="Yamamoto J."/>
            <person name="Saito K."/>
            <person name="Kawai Y."/>
            <person name="Isono Y."/>
            <person name="Nakamura Y."/>
            <person name="Nagahari K."/>
            <person name="Murakami K."/>
            <person name="Yasuda T."/>
            <person name="Iwayanagi T."/>
            <person name="Wagatsuma M."/>
            <person name="Shiratori A."/>
            <person name="Sudo H."/>
            <person name="Hosoiri T."/>
            <person name="Kaku Y."/>
            <person name="Kodaira H."/>
            <person name="Kondo H."/>
            <person name="Sugawara M."/>
            <person name="Takahashi M."/>
            <person name="Kanda K."/>
            <person name="Yokoi T."/>
            <person name="Furuya T."/>
            <person name="Kikkawa E."/>
            <person name="Omura Y."/>
            <person name="Abe K."/>
            <person name="Kamihara K."/>
            <person name="Katsuta N."/>
            <person name="Sato K."/>
            <person name="Tanikawa M."/>
            <person name="Yamazaki M."/>
            <person name="Ninomiya K."/>
            <person name="Ishibashi T."/>
            <person name="Yamashita H."/>
            <person name="Murakawa K."/>
            <person name="Fujimori K."/>
            <person name="Tanai H."/>
            <person name="Kimata M."/>
            <person name="Watanabe M."/>
            <person name="Hiraoka S."/>
            <person name="Chiba Y."/>
            <person name="Ishida S."/>
            <person name="Ono Y."/>
            <person name="Takiguchi S."/>
            <person name="Watanabe S."/>
            <person name="Yosida M."/>
            <person name="Hotuta T."/>
            <person name="Kusano J."/>
            <person name="Kanehori K."/>
            <person name="Takahashi-Fujii A."/>
            <person name="Hara H."/>
            <person name="Tanase T.-O."/>
            <person name="Nomura Y."/>
            <person name="Togiya S."/>
            <person name="Komai F."/>
            <person name="Hara R."/>
            <person name="Takeuchi K."/>
            <person name="Arita M."/>
            <person name="Imose N."/>
            <person name="Musashino K."/>
            <person name="Yuuki H."/>
            <person name="Oshima A."/>
            <person name="Sasaki N."/>
            <person name="Aotsuka S."/>
            <person name="Yoshikawa Y."/>
            <person name="Matsunawa H."/>
            <person name="Ichihara T."/>
            <person name="Shiohata N."/>
            <person name="Sano S."/>
            <person name="Moriya S."/>
            <person name="Momiyama H."/>
            <person name="Satoh N."/>
            <person name="Takami S."/>
            <person name="Terashima Y."/>
            <person name="Suzuki O."/>
            <person name="Nakagawa S."/>
            <person name="Senoh A."/>
            <person name="Mizoguchi H."/>
            <person name="Goto Y."/>
            <person name="Shimizu F."/>
            <person name="Wakebe H."/>
            <person name="Hishigaki H."/>
            <person name="Watanabe T."/>
            <person name="Sugiyama A."/>
            <person name="Takemoto M."/>
            <person name="Kawakami B."/>
            <person name="Yamazaki M."/>
            <person name="Watanabe K."/>
            <person name="Kumagai A."/>
            <person name="Itakura S."/>
            <person name="Fukuzumi Y."/>
            <person name="Fujimori Y."/>
            <person name="Komiyama M."/>
            <person name="Tashiro H."/>
            <person name="Tanigami A."/>
            <person name="Fujiwara T."/>
            <person name="Ono T."/>
            <person name="Yamada K."/>
            <person name="Fujii Y."/>
            <person name="Ozaki K."/>
            <person name="Hirao M."/>
            <person name="Ohmori Y."/>
            <person name="Kawabata A."/>
            <person name="Hikiji T."/>
            <person name="Kobatake N."/>
            <person name="Inagaki H."/>
            <person name="Ikema Y."/>
            <person name="Okamoto S."/>
            <person name="Okitani R."/>
            <person name="Kawakami T."/>
            <person name="Noguchi S."/>
            <person name="Itoh T."/>
            <person name="Shigeta K."/>
            <person name="Senba T."/>
            <person name="Matsumura K."/>
            <person name="Nakajima Y."/>
            <person name="Mizuno T."/>
            <person name="Morinaga M."/>
            <person name="Sasaki M."/>
            <person name="Togashi T."/>
            <person name="Oyama M."/>
            <person name="Hata H."/>
            <person name="Watanabe M."/>
            <person name="Komatsu T."/>
            <person name="Mizushima-Sugano J."/>
            <person name="Satoh T."/>
            <person name="Shirai Y."/>
            <person name="Takahashi Y."/>
            <person name="Nakagawa K."/>
            <person name="Okumura K."/>
            <person name="Nagase T."/>
            <person name="Nomura N."/>
            <person name="Kikuchi H."/>
            <person name="Masuho Y."/>
            <person name="Yamashita R."/>
            <person name="Nakai K."/>
            <person name="Yada T."/>
            <person name="Nakamura Y."/>
            <person name="Ohara O."/>
            <person name="Isogai T."/>
            <person name="Sugano S."/>
        </authorList>
    </citation>
    <scope>NUCLEOTIDE SEQUENCE [LARGE SCALE MRNA] (ISOFORM 1)</scope>
    <scope>VARIANT MET-119</scope>
    <source>
        <tissue>Brain</tissue>
    </source>
</reference>
<reference key="2">
    <citation type="journal article" date="2005" name="Nature">
        <title>Generation and annotation of the DNA sequences of human chromosomes 2 and 4.</title>
        <authorList>
            <person name="Hillier L.W."/>
            <person name="Graves T.A."/>
            <person name="Fulton R.S."/>
            <person name="Fulton L.A."/>
            <person name="Pepin K.H."/>
            <person name="Minx P."/>
            <person name="Wagner-McPherson C."/>
            <person name="Layman D."/>
            <person name="Wylie K."/>
            <person name="Sekhon M."/>
            <person name="Becker M.C."/>
            <person name="Fewell G.A."/>
            <person name="Delehaunty K.D."/>
            <person name="Miner T.L."/>
            <person name="Nash W.E."/>
            <person name="Kremitzki C."/>
            <person name="Oddy L."/>
            <person name="Du H."/>
            <person name="Sun H."/>
            <person name="Bradshaw-Cordum H."/>
            <person name="Ali J."/>
            <person name="Carter J."/>
            <person name="Cordes M."/>
            <person name="Harris A."/>
            <person name="Isak A."/>
            <person name="van Brunt A."/>
            <person name="Nguyen C."/>
            <person name="Du F."/>
            <person name="Courtney L."/>
            <person name="Kalicki J."/>
            <person name="Ozersky P."/>
            <person name="Abbott S."/>
            <person name="Armstrong J."/>
            <person name="Belter E.A."/>
            <person name="Caruso L."/>
            <person name="Cedroni M."/>
            <person name="Cotton M."/>
            <person name="Davidson T."/>
            <person name="Desai A."/>
            <person name="Elliott G."/>
            <person name="Erb T."/>
            <person name="Fronick C."/>
            <person name="Gaige T."/>
            <person name="Haakenson W."/>
            <person name="Haglund K."/>
            <person name="Holmes A."/>
            <person name="Harkins R."/>
            <person name="Kim K."/>
            <person name="Kruchowski S.S."/>
            <person name="Strong C.M."/>
            <person name="Grewal N."/>
            <person name="Goyea E."/>
            <person name="Hou S."/>
            <person name="Levy A."/>
            <person name="Martinka S."/>
            <person name="Mead K."/>
            <person name="McLellan M.D."/>
            <person name="Meyer R."/>
            <person name="Randall-Maher J."/>
            <person name="Tomlinson C."/>
            <person name="Dauphin-Kohlberg S."/>
            <person name="Kozlowicz-Reilly A."/>
            <person name="Shah N."/>
            <person name="Swearengen-Shahid S."/>
            <person name="Snider J."/>
            <person name="Strong J.T."/>
            <person name="Thompson J."/>
            <person name="Yoakum M."/>
            <person name="Leonard S."/>
            <person name="Pearman C."/>
            <person name="Trani L."/>
            <person name="Radionenko M."/>
            <person name="Waligorski J.E."/>
            <person name="Wang C."/>
            <person name="Rock S.M."/>
            <person name="Tin-Wollam A.-M."/>
            <person name="Maupin R."/>
            <person name="Latreille P."/>
            <person name="Wendl M.C."/>
            <person name="Yang S.-P."/>
            <person name="Pohl C."/>
            <person name="Wallis J.W."/>
            <person name="Spieth J."/>
            <person name="Bieri T.A."/>
            <person name="Berkowicz N."/>
            <person name="Nelson J.O."/>
            <person name="Osborne J."/>
            <person name="Ding L."/>
            <person name="Meyer R."/>
            <person name="Sabo A."/>
            <person name="Shotland Y."/>
            <person name="Sinha P."/>
            <person name="Wohldmann P.E."/>
            <person name="Cook L.L."/>
            <person name="Hickenbotham M.T."/>
            <person name="Eldred J."/>
            <person name="Williams D."/>
            <person name="Jones T.A."/>
            <person name="She X."/>
            <person name="Ciccarelli F.D."/>
            <person name="Izaurralde E."/>
            <person name="Taylor J."/>
            <person name="Schmutz J."/>
            <person name="Myers R.M."/>
            <person name="Cox D.R."/>
            <person name="Huang X."/>
            <person name="McPherson J.D."/>
            <person name="Mardis E.R."/>
            <person name="Clifton S.W."/>
            <person name="Warren W.C."/>
            <person name="Chinwalla A.T."/>
            <person name="Eddy S.R."/>
            <person name="Marra M.A."/>
            <person name="Ovcharenko I."/>
            <person name="Furey T.S."/>
            <person name="Miller W."/>
            <person name="Eichler E.E."/>
            <person name="Bork P."/>
            <person name="Suyama M."/>
            <person name="Torrents D."/>
            <person name="Waterston R.H."/>
            <person name="Wilson R.K."/>
        </authorList>
    </citation>
    <scope>NUCLEOTIDE SEQUENCE [LARGE SCALE GENOMIC DNA]</scope>
</reference>
<reference key="3">
    <citation type="submission" date="2005-09" db="EMBL/GenBank/DDBJ databases">
        <authorList>
            <person name="Mural R.J."/>
            <person name="Istrail S."/>
            <person name="Sutton G.G."/>
            <person name="Florea L."/>
            <person name="Halpern A.L."/>
            <person name="Mobarry C.M."/>
            <person name="Lippert R."/>
            <person name="Walenz B."/>
            <person name="Shatkay H."/>
            <person name="Dew I."/>
            <person name="Miller J.R."/>
            <person name="Flanigan M.J."/>
            <person name="Edwards N.J."/>
            <person name="Bolanos R."/>
            <person name="Fasulo D."/>
            <person name="Halldorsson B.V."/>
            <person name="Hannenhalli S."/>
            <person name="Turner R."/>
            <person name="Yooseph S."/>
            <person name="Lu F."/>
            <person name="Nusskern D.R."/>
            <person name="Shue B.C."/>
            <person name="Zheng X.H."/>
            <person name="Zhong F."/>
            <person name="Delcher A.L."/>
            <person name="Huson D.H."/>
            <person name="Kravitz S.A."/>
            <person name="Mouchard L."/>
            <person name="Reinert K."/>
            <person name="Remington K.A."/>
            <person name="Clark A.G."/>
            <person name="Waterman M.S."/>
            <person name="Eichler E.E."/>
            <person name="Adams M.D."/>
            <person name="Hunkapiller M.W."/>
            <person name="Myers E.W."/>
            <person name="Venter J.C."/>
        </authorList>
    </citation>
    <scope>NUCLEOTIDE SEQUENCE [LARGE SCALE GENOMIC DNA]</scope>
</reference>
<reference key="4">
    <citation type="journal article" date="2004" name="Genome Res.">
        <title>The status, quality, and expansion of the NIH full-length cDNA project: the Mammalian Gene Collection (MGC).</title>
        <authorList>
            <consortium name="The MGC Project Team"/>
        </authorList>
    </citation>
    <scope>NUCLEOTIDE SEQUENCE [LARGE SCALE MRNA] (ISOFORMS 1; 2 AND 4)</scope>
    <source>
        <tissue>Ovary</tissue>
    </source>
</reference>
<reference key="5">
    <citation type="journal article" date="2007" name="BMC Genomics">
        <title>The full-ORF clone resource of the German cDNA consortium.</title>
        <authorList>
            <person name="Bechtel S."/>
            <person name="Rosenfelder H."/>
            <person name="Duda A."/>
            <person name="Schmidt C.P."/>
            <person name="Ernst U."/>
            <person name="Wellenreuther R."/>
            <person name="Mehrle A."/>
            <person name="Schuster C."/>
            <person name="Bahr A."/>
            <person name="Bloecker H."/>
            <person name="Heubner D."/>
            <person name="Hoerlein A."/>
            <person name="Michel G."/>
            <person name="Wedler H."/>
            <person name="Koehrer K."/>
            <person name="Ottenwaelder B."/>
            <person name="Poustka A."/>
            <person name="Wiemann S."/>
            <person name="Schupp I."/>
        </authorList>
    </citation>
    <scope>NUCLEOTIDE SEQUENCE [LARGE SCALE MRNA] OF 1-176 (ISOFORM 3)</scope>
    <source>
        <tissue>Brain</tissue>
    </source>
</reference>